<feature type="chain" id="PRO_1000018976" description="Bifunctional purine biosynthesis protein PurH">
    <location>
        <begin position="1"/>
        <end position="540"/>
    </location>
</feature>
<feature type="domain" description="MGS-like" evidence="2">
    <location>
        <begin position="1"/>
        <end position="144"/>
    </location>
</feature>
<feature type="region of interest" description="Disordered" evidence="3">
    <location>
        <begin position="204"/>
        <end position="224"/>
    </location>
</feature>
<gene>
    <name evidence="1" type="primary">purH</name>
    <name type="ordered locus">STH2850</name>
</gene>
<accession>Q67KG3</accession>
<sequence length="540" mass="57507">MKRALISVYDKQGIVEFARGLADLGVEIISTGGTYRTLQGAGIPVREVAEVAGFPEILDGRVKSLQPQIHAGILAMRANPTHMAQLAEHGIGLIDLVVVNLYPFRETVANPAVTLEEAIEKIDIGGPAMVRAAAKNYQDVGVVVNPARYPAVLAELRETGDLSLPTRFSLMLEAFQHTAAYDGAIAGWMATRGREIVATRALGETAPERPIGADPGPQKPAAPSPFPDVLSLTFTKVQELRYGENPHQAAAFYSDGSDGGTVIARAKQLHGKELSFNNINDAHAALELVKEFEEPAAVAIKHANPCGVAVAPTIAEAFRKAYEADTVSIFGGIVALNRPCDRETAEALSKIFLEIVIAPAFAPEALEVLTRKKNLRLLAVGPIDRNPPSGFDMKRVGGGLLVQSWDAIAEDPVAWKPVTKAAPTPEQLRDLAFAMKVCKHVKSNAIVVARDGQTLGVGAGQMNRIDAARFALRQAGEKARGAVLASDAFFPFPDVVEAAGEAGIAAIVQPGGSIRDEESIARADELGLAMVFTGVRHFRH</sequence>
<organism>
    <name type="scientific">Symbiobacterium thermophilum (strain DSM 24528 / JCM 14929 / IAM 14863 / T)</name>
    <dbReference type="NCBI Taxonomy" id="292459"/>
    <lineage>
        <taxon>Bacteria</taxon>
        <taxon>Bacillati</taxon>
        <taxon>Bacillota</taxon>
        <taxon>Clostridia</taxon>
        <taxon>Eubacteriales</taxon>
        <taxon>Symbiobacteriaceae</taxon>
        <taxon>Symbiobacterium</taxon>
    </lineage>
</organism>
<comment type="catalytic activity">
    <reaction evidence="1">
        <text>(6R)-10-formyltetrahydrofolate + 5-amino-1-(5-phospho-beta-D-ribosyl)imidazole-4-carboxamide = 5-formamido-1-(5-phospho-D-ribosyl)imidazole-4-carboxamide + (6S)-5,6,7,8-tetrahydrofolate</text>
        <dbReference type="Rhea" id="RHEA:22192"/>
        <dbReference type="ChEBI" id="CHEBI:57453"/>
        <dbReference type="ChEBI" id="CHEBI:58467"/>
        <dbReference type="ChEBI" id="CHEBI:58475"/>
        <dbReference type="ChEBI" id="CHEBI:195366"/>
        <dbReference type="EC" id="2.1.2.3"/>
    </reaction>
</comment>
<comment type="catalytic activity">
    <reaction evidence="1">
        <text>IMP + H2O = 5-formamido-1-(5-phospho-D-ribosyl)imidazole-4-carboxamide</text>
        <dbReference type="Rhea" id="RHEA:18445"/>
        <dbReference type="ChEBI" id="CHEBI:15377"/>
        <dbReference type="ChEBI" id="CHEBI:58053"/>
        <dbReference type="ChEBI" id="CHEBI:58467"/>
        <dbReference type="EC" id="3.5.4.10"/>
    </reaction>
</comment>
<comment type="pathway">
    <text evidence="1">Purine metabolism; IMP biosynthesis via de novo pathway; 5-formamido-1-(5-phospho-D-ribosyl)imidazole-4-carboxamide from 5-amino-1-(5-phospho-D-ribosyl)imidazole-4-carboxamide (10-formyl THF route): step 1/1.</text>
</comment>
<comment type="pathway">
    <text evidence="1">Purine metabolism; IMP biosynthesis via de novo pathway; IMP from 5-formamido-1-(5-phospho-D-ribosyl)imidazole-4-carboxamide: step 1/1.</text>
</comment>
<comment type="domain">
    <text evidence="1">The IMP cyclohydrolase activity resides in the N-terminal region.</text>
</comment>
<comment type="similarity">
    <text evidence="1">Belongs to the PurH family.</text>
</comment>
<reference key="1">
    <citation type="journal article" date="2004" name="Nucleic Acids Res.">
        <title>Genome sequence of Symbiobacterium thermophilum, an uncultivable bacterium that depends on microbial commensalism.</title>
        <authorList>
            <person name="Ueda K."/>
            <person name="Yamashita A."/>
            <person name="Ishikawa J."/>
            <person name="Shimada M."/>
            <person name="Watsuji T."/>
            <person name="Morimura K."/>
            <person name="Ikeda H."/>
            <person name="Hattori M."/>
            <person name="Beppu T."/>
        </authorList>
    </citation>
    <scope>NUCLEOTIDE SEQUENCE [LARGE SCALE GENOMIC DNA]</scope>
    <source>
        <strain>DSM 24528 / JCM 14929 / IAM 14863 / T</strain>
    </source>
</reference>
<protein>
    <recommendedName>
        <fullName evidence="1">Bifunctional purine biosynthesis protein PurH</fullName>
    </recommendedName>
    <domain>
        <recommendedName>
            <fullName evidence="1">Phosphoribosylaminoimidazolecarboxamide formyltransferase</fullName>
            <ecNumber evidence="1">2.1.2.3</ecNumber>
        </recommendedName>
        <alternativeName>
            <fullName evidence="1">AICAR transformylase</fullName>
        </alternativeName>
    </domain>
    <domain>
        <recommendedName>
            <fullName evidence="1">IMP cyclohydrolase</fullName>
            <ecNumber evidence="1">3.5.4.10</ecNumber>
        </recommendedName>
        <alternativeName>
            <fullName evidence="1">ATIC</fullName>
        </alternativeName>
        <alternativeName>
            <fullName evidence="1">IMP synthase</fullName>
        </alternativeName>
        <alternativeName>
            <fullName evidence="1">Inosinicase</fullName>
        </alternativeName>
    </domain>
</protein>
<name>PUR9_SYMTH</name>
<keyword id="KW-0378">Hydrolase</keyword>
<keyword id="KW-0511">Multifunctional enzyme</keyword>
<keyword id="KW-0658">Purine biosynthesis</keyword>
<keyword id="KW-1185">Reference proteome</keyword>
<keyword id="KW-0808">Transferase</keyword>
<evidence type="ECO:0000255" key="1">
    <source>
        <dbReference type="HAMAP-Rule" id="MF_00139"/>
    </source>
</evidence>
<evidence type="ECO:0000255" key="2">
    <source>
        <dbReference type="PROSITE-ProRule" id="PRU01202"/>
    </source>
</evidence>
<evidence type="ECO:0000256" key="3">
    <source>
        <dbReference type="SAM" id="MobiDB-lite"/>
    </source>
</evidence>
<proteinExistence type="inferred from homology"/>
<dbReference type="EC" id="2.1.2.3" evidence="1"/>
<dbReference type="EC" id="3.5.4.10" evidence="1"/>
<dbReference type="EMBL" id="AP006840">
    <property type="protein sequence ID" value="BAD41835.1"/>
    <property type="molecule type" value="Genomic_DNA"/>
</dbReference>
<dbReference type="SMR" id="Q67KG3"/>
<dbReference type="STRING" id="292459.STH2850"/>
<dbReference type="KEGG" id="sth:STH2850"/>
<dbReference type="eggNOG" id="COG0138">
    <property type="taxonomic scope" value="Bacteria"/>
</dbReference>
<dbReference type="HOGENOM" id="CLU_016316_5_2_9"/>
<dbReference type="UniPathway" id="UPA00074">
    <property type="reaction ID" value="UER00133"/>
</dbReference>
<dbReference type="UniPathway" id="UPA00074">
    <property type="reaction ID" value="UER00135"/>
</dbReference>
<dbReference type="Proteomes" id="UP000000417">
    <property type="component" value="Chromosome"/>
</dbReference>
<dbReference type="GO" id="GO:0005829">
    <property type="term" value="C:cytosol"/>
    <property type="evidence" value="ECO:0007669"/>
    <property type="project" value="TreeGrafter"/>
</dbReference>
<dbReference type="GO" id="GO:0003937">
    <property type="term" value="F:IMP cyclohydrolase activity"/>
    <property type="evidence" value="ECO:0007669"/>
    <property type="project" value="UniProtKB-UniRule"/>
</dbReference>
<dbReference type="GO" id="GO:0004643">
    <property type="term" value="F:phosphoribosylaminoimidazolecarboxamide formyltransferase activity"/>
    <property type="evidence" value="ECO:0007669"/>
    <property type="project" value="UniProtKB-UniRule"/>
</dbReference>
<dbReference type="GO" id="GO:0006189">
    <property type="term" value="P:'de novo' IMP biosynthetic process"/>
    <property type="evidence" value="ECO:0007669"/>
    <property type="project" value="UniProtKB-UniRule"/>
</dbReference>
<dbReference type="CDD" id="cd01421">
    <property type="entry name" value="IMPCH"/>
    <property type="match status" value="1"/>
</dbReference>
<dbReference type="FunFam" id="3.40.140.20:FF:000001">
    <property type="entry name" value="Bifunctional purine biosynthesis protein PurH"/>
    <property type="match status" value="1"/>
</dbReference>
<dbReference type="FunFam" id="3.40.140.20:FF:000002">
    <property type="entry name" value="Bifunctional purine biosynthesis protein PurH"/>
    <property type="match status" value="1"/>
</dbReference>
<dbReference type="FunFam" id="3.40.50.1380:FF:000001">
    <property type="entry name" value="Bifunctional purine biosynthesis protein PurH"/>
    <property type="match status" value="1"/>
</dbReference>
<dbReference type="Gene3D" id="3.40.140.20">
    <property type="match status" value="2"/>
</dbReference>
<dbReference type="Gene3D" id="3.40.50.1380">
    <property type="entry name" value="Methylglyoxal synthase-like domain"/>
    <property type="match status" value="1"/>
</dbReference>
<dbReference type="HAMAP" id="MF_00139">
    <property type="entry name" value="PurH"/>
    <property type="match status" value="1"/>
</dbReference>
<dbReference type="InterPro" id="IPR024051">
    <property type="entry name" value="AICAR_Tfase_dup_dom_sf"/>
</dbReference>
<dbReference type="InterPro" id="IPR016193">
    <property type="entry name" value="Cytidine_deaminase-like"/>
</dbReference>
<dbReference type="InterPro" id="IPR011607">
    <property type="entry name" value="MGS-like_dom"/>
</dbReference>
<dbReference type="InterPro" id="IPR036914">
    <property type="entry name" value="MGS-like_dom_sf"/>
</dbReference>
<dbReference type="InterPro" id="IPR002695">
    <property type="entry name" value="PurH-like"/>
</dbReference>
<dbReference type="NCBIfam" id="NF002049">
    <property type="entry name" value="PRK00881.1"/>
    <property type="match status" value="1"/>
</dbReference>
<dbReference type="NCBIfam" id="TIGR00355">
    <property type="entry name" value="purH"/>
    <property type="match status" value="1"/>
</dbReference>
<dbReference type="PANTHER" id="PTHR11692:SF0">
    <property type="entry name" value="BIFUNCTIONAL PURINE BIOSYNTHESIS PROTEIN ATIC"/>
    <property type="match status" value="1"/>
</dbReference>
<dbReference type="PANTHER" id="PTHR11692">
    <property type="entry name" value="BIFUNCTIONAL PURINE BIOSYNTHESIS PROTEIN PURH"/>
    <property type="match status" value="1"/>
</dbReference>
<dbReference type="Pfam" id="PF01808">
    <property type="entry name" value="AICARFT_IMPCHas"/>
    <property type="match status" value="1"/>
</dbReference>
<dbReference type="Pfam" id="PF02142">
    <property type="entry name" value="MGS"/>
    <property type="match status" value="1"/>
</dbReference>
<dbReference type="PIRSF" id="PIRSF000414">
    <property type="entry name" value="AICARFT_IMPCHas"/>
    <property type="match status" value="1"/>
</dbReference>
<dbReference type="SMART" id="SM00798">
    <property type="entry name" value="AICARFT_IMPCHas"/>
    <property type="match status" value="1"/>
</dbReference>
<dbReference type="SMART" id="SM00851">
    <property type="entry name" value="MGS"/>
    <property type="match status" value="1"/>
</dbReference>
<dbReference type="SUPFAM" id="SSF53927">
    <property type="entry name" value="Cytidine deaminase-like"/>
    <property type="match status" value="1"/>
</dbReference>
<dbReference type="SUPFAM" id="SSF52335">
    <property type="entry name" value="Methylglyoxal synthase-like"/>
    <property type="match status" value="1"/>
</dbReference>
<dbReference type="PROSITE" id="PS51855">
    <property type="entry name" value="MGS"/>
    <property type="match status" value="1"/>
</dbReference>